<keyword id="KW-0998">Cell outer membrane</keyword>
<keyword id="KW-0472">Membrane</keyword>
<keyword id="KW-0732">Signal</keyword>
<keyword id="KW-0812">Transmembrane</keyword>
<keyword id="KW-1134">Transmembrane beta strand</keyword>
<dbReference type="EMBL" id="Z18935">
    <property type="protein sequence ID" value="CAA79368.1"/>
    <property type="molecule type" value="Genomic_DNA"/>
</dbReference>
<dbReference type="PIR" id="S36343">
    <property type="entry name" value="S36343"/>
</dbReference>
<dbReference type="SMR" id="Q04880"/>
<dbReference type="Reactome" id="R-HSA-202733">
    <property type="pathway name" value="Cell surface interactions at the vascular wall"/>
</dbReference>
<dbReference type="GO" id="GO:0009279">
    <property type="term" value="C:cell outer membrane"/>
    <property type="evidence" value="ECO:0000304"/>
    <property type="project" value="Reactome"/>
</dbReference>
<dbReference type="GO" id="GO:0015288">
    <property type="term" value="F:porin activity"/>
    <property type="evidence" value="ECO:0007669"/>
    <property type="project" value="InterPro"/>
</dbReference>
<dbReference type="FunFam" id="2.40.160.20:FF:000005">
    <property type="entry name" value="Opacity protein opA54"/>
    <property type="match status" value="1"/>
</dbReference>
<dbReference type="Gene3D" id="2.40.160.20">
    <property type="match status" value="1"/>
</dbReference>
<dbReference type="InterPro" id="IPR011250">
    <property type="entry name" value="OMP/PagP_b-brl"/>
</dbReference>
<dbReference type="InterPro" id="IPR003394">
    <property type="entry name" value="Porin_opacity"/>
</dbReference>
<dbReference type="Pfam" id="PF02462">
    <property type="entry name" value="Opacity"/>
    <property type="match status" value="1"/>
</dbReference>
<dbReference type="SUPFAM" id="SSF56925">
    <property type="entry name" value="OMPA-like"/>
    <property type="match status" value="1"/>
</dbReference>
<feature type="signal peptide" evidence="1">
    <location>
        <begin position="1" status="less than"/>
        <end position="1"/>
    </location>
</feature>
<feature type="chain" id="PRO_0000021915" description="Opacity protein opA57">
    <location>
        <begin position="2"/>
        <end position="237" status="greater than"/>
    </location>
</feature>
<feature type="non-terminal residue">
    <location>
        <position position="1"/>
    </location>
</feature>
<feature type="non-terminal residue">
    <location>
        <position position="237"/>
    </location>
</feature>
<proteinExistence type="inferred from homology"/>
<sequence>ASEDGGRGPYVQADLAYAYEHITHDYPEPTAPNKNKISTVSDYFRNIRTRSVHPRVSVGYDFGGWRIAADYARYRKWNNNKYSVSIKELLRNKGNGNRTDLKAENQENGTFHAVSSLGLSAVYDFKLNDKFKPYIGARVAYGHVRHSIDSTKKTTEVTTILHGPGTTPTVYPGKNTQDAHRESDSIRRVGLGAVAGVGIDITPNLTLDAGYRYHYWGRLENTRFKTHEASLGVRYRF</sequence>
<gene>
    <name type="primary">opaK</name>
</gene>
<name>OPAK_NEIGO</name>
<reference key="1">
    <citation type="journal article" date="1993" name="EMBO J.">
        <title>Variable opacity (Opa) outer membrane proteins account for the cell tropisms displayed by Neisseria gonorrhoeae for human leukocytes and epithelial cells.</title>
        <authorList>
            <person name="Kupsch E.-M."/>
            <person name="Knepper B."/>
            <person name="Kuroki T."/>
            <person name="Heuer I."/>
            <person name="Meyer T.F."/>
        </authorList>
    </citation>
    <scope>NUCLEOTIDE SEQUENCE [GENOMIC DNA]</scope>
    <source>
        <strain>MS11 / F3</strain>
    </source>
</reference>
<organism>
    <name type="scientific">Neisseria gonorrhoeae</name>
    <dbReference type="NCBI Taxonomy" id="485"/>
    <lineage>
        <taxon>Bacteria</taxon>
        <taxon>Pseudomonadati</taxon>
        <taxon>Pseudomonadota</taxon>
        <taxon>Betaproteobacteria</taxon>
        <taxon>Neisseriales</taxon>
        <taxon>Neisseriaceae</taxon>
        <taxon>Neisseria</taxon>
    </lineage>
</organism>
<evidence type="ECO:0000255" key="1"/>
<evidence type="ECO:0000305" key="2"/>
<accession>Q04880</accession>
<protein>
    <recommendedName>
        <fullName>Opacity protein opA57</fullName>
    </recommendedName>
</protein>
<comment type="function">
    <text>Implicated in a number of adherence functions. OPA proteins are implicated in pathogenesis and are subject to phase variation.</text>
</comment>
<comment type="subcellular location">
    <subcellularLocation>
        <location>Cell outer membrane</location>
    </subcellularLocation>
</comment>
<comment type="similarity">
    <text evidence="2">Belongs to the opacity porin family.</text>
</comment>